<comment type="function">
    <text evidence="2">Usually encoded in the trnK tRNA gene intron. Probably assists in splicing its own and other chloroplast group II introns.</text>
</comment>
<comment type="subcellular location">
    <subcellularLocation>
        <location>Plastid</location>
        <location>Chloroplast</location>
    </subcellularLocation>
</comment>
<comment type="RNA editing">
    <location>
        <position position="420" evidence="1"/>
    </location>
</comment>
<comment type="similarity">
    <text evidence="2">Belongs to the intron maturase 2 family. MatK subfamily.</text>
</comment>
<comment type="sequence caution" evidence="3">
    <conflict type="erroneous initiation">
        <sequence resource="EMBL-CDS" id="AAS46103"/>
    </conflict>
    <text>Extended N-terminus.</text>
</comment>
<proteinExistence type="inferred from homology"/>
<gene>
    <name evidence="2" type="primary">matK</name>
    <name type="synonym">ycf14</name>
    <name type="ORF">9311002</name>
</gene>
<organism>
    <name type="scientific">Oryza sativa subsp. indica</name>
    <name type="common">Rice</name>
    <dbReference type="NCBI Taxonomy" id="39946"/>
    <lineage>
        <taxon>Eukaryota</taxon>
        <taxon>Viridiplantae</taxon>
        <taxon>Streptophyta</taxon>
        <taxon>Embryophyta</taxon>
        <taxon>Tracheophyta</taxon>
        <taxon>Spermatophyta</taxon>
        <taxon>Magnoliopsida</taxon>
        <taxon>Liliopsida</taxon>
        <taxon>Poales</taxon>
        <taxon>Poaceae</taxon>
        <taxon>BOP clade</taxon>
        <taxon>Oryzoideae</taxon>
        <taxon>Oryzeae</taxon>
        <taxon>Oryzinae</taxon>
        <taxon>Oryza</taxon>
        <taxon>Oryza sativa</taxon>
    </lineage>
</organism>
<name>MATK_ORYSI</name>
<protein>
    <recommendedName>
        <fullName evidence="2">Maturase K</fullName>
    </recommendedName>
    <alternativeName>
        <fullName evidence="2">Intron maturase</fullName>
    </alternativeName>
</protein>
<dbReference type="EMBL" id="AY522329">
    <property type="protein sequence ID" value="AAS46103.1"/>
    <property type="status" value="ALT_SEQ"/>
    <property type="molecule type" value="Genomic_DNA"/>
</dbReference>
<dbReference type="RefSeq" id="YP_009161345.1">
    <property type="nucleotide sequence ID" value="NC_027678.1"/>
</dbReference>
<dbReference type="RefSeq" id="YP_654200.2">
    <property type="nucleotide sequence ID" value="NC_008155.1"/>
</dbReference>
<dbReference type="STRING" id="39946.P0C382"/>
<dbReference type="GeneID" id="4126879"/>
<dbReference type="Proteomes" id="UP000007015">
    <property type="component" value="Chloroplast"/>
</dbReference>
<dbReference type="GO" id="GO:0009507">
    <property type="term" value="C:chloroplast"/>
    <property type="evidence" value="ECO:0007669"/>
    <property type="project" value="UniProtKB-SubCell"/>
</dbReference>
<dbReference type="GO" id="GO:0009536">
    <property type="term" value="C:plastid"/>
    <property type="evidence" value="ECO:0000305"/>
    <property type="project" value="Gramene"/>
</dbReference>
<dbReference type="GO" id="GO:0003723">
    <property type="term" value="F:RNA binding"/>
    <property type="evidence" value="ECO:0007669"/>
    <property type="project" value="UniProtKB-KW"/>
</dbReference>
<dbReference type="GO" id="GO:0006397">
    <property type="term" value="P:mRNA processing"/>
    <property type="evidence" value="ECO:0007669"/>
    <property type="project" value="UniProtKB-KW"/>
</dbReference>
<dbReference type="GO" id="GO:0008380">
    <property type="term" value="P:RNA splicing"/>
    <property type="evidence" value="ECO:0007669"/>
    <property type="project" value="UniProtKB-UniRule"/>
</dbReference>
<dbReference type="GO" id="GO:0008033">
    <property type="term" value="P:tRNA processing"/>
    <property type="evidence" value="ECO:0007669"/>
    <property type="project" value="UniProtKB-KW"/>
</dbReference>
<dbReference type="HAMAP" id="MF_01390">
    <property type="entry name" value="MatK"/>
    <property type="match status" value="1"/>
</dbReference>
<dbReference type="InterPro" id="IPR024937">
    <property type="entry name" value="Domain_X"/>
</dbReference>
<dbReference type="InterPro" id="IPR002866">
    <property type="entry name" value="Maturase_MatK"/>
</dbReference>
<dbReference type="InterPro" id="IPR024942">
    <property type="entry name" value="Maturase_MatK_N"/>
</dbReference>
<dbReference type="PANTHER" id="PTHR34811">
    <property type="entry name" value="MATURASE K"/>
    <property type="match status" value="1"/>
</dbReference>
<dbReference type="PANTHER" id="PTHR34811:SF1">
    <property type="entry name" value="MATURASE K"/>
    <property type="match status" value="1"/>
</dbReference>
<dbReference type="Pfam" id="PF01348">
    <property type="entry name" value="Intron_maturas2"/>
    <property type="match status" value="1"/>
</dbReference>
<dbReference type="Pfam" id="PF01824">
    <property type="entry name" value="MatK_N"/>
    <property type="match status" value="1"/>
</dbReference>
<feature type="chain" id="PRO_0000289032" description="Maturase K">
    <location>
        <begin position="1"/>
        <end position="511"/>
    </location>
</feature>
<accession>P0C382</accession>
<accession>P12175</accession>
<accession>Q6QY26</accession>
<accession>Q6QY89</accession>
<keyword id="KW-0150">Chloroplast</keyword>
<keyword id="KW-0507">mRNA processing</keyword>
<keyword id="KW-0934">Plastid</keyword>
<keyword id="KW-1185">Reference proteome</keyword>
<keyword id="KW-0691">RNA editing</keyword>
<keyword id="KW-0694">RNA-binding</keyword>
<keyword id="KW-0819">tRNA processing</keyword>
<evidence type="ECO:0000250" key="1"/>
<evidence type="ECO:0000255" key="2">
    <source>
        <dbReference type="HAMAP-Rule" id="MF_01390"/>
    </source>
</evidence>
<evidence type="ECO:0000305" key="3"/>
<sequence>MEKFEGYSEKLKFPRQYFVYPLLFQEYIYVFAHDYGLNGSELVEIIGSNNKKFSSLLVKRLMIRMYQQNFWINLVNHPNQDRLLDYNNFFYSEFYSQILSEGFAIVVEIPFSLREQSCPEEKEIPKFQNLRSIHSIFPFLEDKFLHLHYLAHIEIPYPIHLDILLQLLQYRIQDVPSLHLLRFFLNYYSNWNSFITSMKSIFILKKENKRLFRFLYNSYVSEYEFFLLFLRKQSSCLRLTSSGTFLERIIFSRKMEHFGLMYPAFFRKTIWFVMDPLMHYVRYQGKAILASKGTLLLKKKWKCYLVRLWQYSFSFWTQPQRIHLNQLENSCFDFLGYFSSVPINSLLVRNQMLENSFLIDTQMKKFDTKVPVTPLIGSLAKAQFCTGSGHPISKPIWTDLSDWDILDRFGRICRNLFHYYSGSSKKKTLYRLKYILRLSCARTLARKHKSTVRAFMQWLGSVFLEEFFTEEEQVFSLMFAKTTYFSFRGSHSERIWYLDILRINDLVNPLN</sequence>
<reference key="1">
    <citation type="journal article" date="2004" name="Plant Physiol.">
        <title>A comparison of rice chloroplast genomes.</title>
        <authorList>
            <person name="Tang J."/>
            <person name="Xia H."/>
            <person name="Cao M."/>
            <person name="Zhang X."/>
            <person name="Zeng W."/>
            <person name="Hu S."/>
            <person name="Tong W."/>
            <person name="Wang J."/>
            <person name="Wang J."/>
            <person name="Yu J."/>
            <person name="Yang H."/>
            <person name="Zhu L."/>
        </authorList>
    </citation>
    <scope>NUCLEOTIDE SEQUENCE [LARGE SCALE GENOMIC DNA]</scope>
    <source>
        <strain>cv. 93-11</strain>
    </source>
</reference>
<geneLocation type="chloroplast"/>